<feature type="chain" id="PRO_0000299334" description="Putative phosphoesterase GK0864">
    <location>
        <begin position="1"/>
        <end position="173"/>
    </location>
</feature>
<feature type="short sequence motif" description="HXTX 1" evidence="1">
    <location>
        <begin position="34"/>
        <end position="37"/>
    </location>
</feature>
<feature type="short sequence motif" description="HXTX 2" evidence="1">
    <location>
        <begin position="115"/>
        <end position="118"/>
    </location>
</feature>
<feature type="active site" description="Proton donor" evidence="1">
    <location>
        <position position="34"/>
    </location>
</feature>
<feature type="active site" description="Proton acceptor" evidence="1">
    <location>
        <position position="115"/>
    </location>
</feature>
<proteinExistence type="inferred from homology"/>
<evidence type="ECO:0000255" key="1">
    <source>
        <dbReference type="HAMAP-Rule" id="MF_01444"/>
    </source>
</evidence>
<dbReference type="EC" id="3.1.-.-" evidence="1"/>
<dbReference type="EMBL" id="BA000043">
    <property type="protein sequence ID" value="BAD75149.1"/>
    <property type="molecule type" value="Genomic_DNA"/>
</dbReference>
<dbReference type="RefSeq" id="WP_011230365.1">
    <property type="nucleotide sequence ID" value="NC_006510.1"/>
</dbReference>
<dbReference type="SMR" id="Q5L1N1"/>
<dbReference type="STRING" id="235909.GK0864"/>
<dbReference type="KEGG" id="gka:GK0864"/>
<dbReference type="eggNOG" id="COG1514">
    <property type="taxonomic scope" value="Bacteria"/>
</dbReference>
<dbReference type="HOGENOM" id="CLU_132020_0_0_9"/>
<dbReference type="Proteomes" id="UP000001172">
    <property type="component" value="Chromosome"/>
</dbReference>
<dbReference type="GO" id="GO:0016788">
    <property type="term" value="F:hydrolase activity, acting on ester bonds"/>
    <property type="evidence" value="ECO:0007669"/>
    <property type="project" value="UniProtKB-UniRule"/>
</dbReference>
<dbReference type="Gene3D" id="3.90.1140.10">
    <property type="entry name" value="Cyclic phosphodiesterase"/>
    <property type="match status" value="1"/>
</dbReference>
<dbReference type="HAMAP" id="MF_01444">
    <property type="entry name" value="2H_phosphoesterase_YjcG"/>
    <property type="match status" value="1"/>
</dbReference>
<dbReference type="InterPro" id="IPR050580">
    <property type="entry name" value="2H_phosphoesterase_YjcG-like"/>
</dbReference>
<dbReference type="InterPro" id="IPR009097">
    <property type="entry name" value="Cyclic_Pdiesterase"/>
</dbReference>
<dbReference type="InterPro" id="IPR022932">
    <property type="entry name" value="YjcG"/>
</dbReference>
<dbReference type="NCBIfam" id="NF010223">
    <property type="entry name" value="PRK13679.1"/>
    <property type="match status" value="1"/>
</dbReference>
<dbReference type="PANTHER" id="PTHR40037:SF1">
    <property type="entry name" value="PHOSPHOESTERASE SAOUHSC_00951-RELATED"/>
    <property type="match status" value="1"/>
</dbReference>
<dbReference type="PANTHER" id="PTHR40037">
    <property type="entry name" value="PHOSPHOESTERASE YJCG-RELATED"/>
    <property type="match status" value="1"/>
</dbReference>
<dbReference type="Pfam" id="PF13563">
    <property type="entry name" value="2_5_RNA_ligase2"/>
    <property type="match status" value="1"/>
</dbReference>
<dbReference type="SUPFAM" id="SSF55144">
    <property type="entry name" value="LigT-like"/>
    <property type="match status" value="1"/>
</dbReference>
<gene>
    <name type="ordered locus">GK0864</name>
</gene>
<organism>
    <name type="scientific">Geobacillus kaustophilus (strain HTA426)</name>
    <dbReference type="NCBI Taxonomy" id="235909"/>
    <lineage>
        <taxon>Bacteria</taxon>
        <taxon>Bacillati</taxon>
        <taxon>Bacillota</taxon>
        <taxon>Bacilli</taxon>
        <taxon>Bacillales</taxon>
        <taxon>Anoxybacillaceae</taxon>
        <taxon>Geobacillus</taxon>
        <taxon>Geobacillus thermoleovorans group</taxon>
    </lineage>
</organism>
<reference key="1">
    <citation type="journal article" date="2004" name="Nucleic Acids Res.">
        <title>Thermoadaptation trait revealed by the genome sequence of thermophilic Geobacillus kaustophilus.</title>
        <authorList>
            <person name="Takami H."/>
            <person name="Takaki Y."/>
            <person name="Chee G.-J."/>
            <person name="Nishi S."/>
            <person name="Shimamura S."/>
            <person name="Suzuki H."/>
            <person name="Matsui S."/>
            <person name="Uchiyama I."/>
        </authorList>
    </citation>
    <scope>NUCLEOTIDE SEQUENCE [LARGE SCALE GENOMIC DNA]</scope>
    <source>
        <strain>HTA426</strain>
    </source>
</reference>
<accession>Q5L1N1</accession>
<name>Y864_GEOKA</name>
<sequence length="173" mass="20162">MKYGIVIFPPKRIQDFANSYRKRYDSHYALIPPHITLKYPFEADEEQIKKMAKELRRIAAETPPIPIKVTKFSSFYPTSNIIYLKVEPNDVLERLHEQLHSGLFAGKPEFVFVPHITIGRDLPGAEYADVYSQLKLQDVHFEETVDRFHLLYQLENGSWTVYETFIVGGKETV</sequence>
<protein>
    <recommendedName>
        <fullName evidence="1">Putative phosphoesterase GK0864</fullName>
        <ecNumber evidence="1">3.1.-.-</ecNumber>
    </recommendedName>
</protein>
<keyword id="KW-0378">Hydrolase</keyword>
<keyword id="KW-1185">Reference proteome</keyword>
<comment type="similarity">
    <text evidence="1">Belongs to the 2H phosphoesterase superfamily. YjcG family.</text>
</comment>